<dbReference type="EMBL" id="M30502">
    <property type="protein sequence ID" value="AAB00744.1"/>
    <property type="molecule type" value="Genomic_DNA"/>
</dbReference>
<dbReference type="RefSeq" id="NP_056845.1">
    <property type="nucleotide sequence ID" value="NC_001722.1"/>
</dbReference>
<dbReference type="SMR" id="P18092"/>
<dbReference type="KEGG" id="vg:1724715"/>
<dbReference type="Proteomes" id="UP000002242">
    <property type="component" value="Segment"/>
</dbReference>
<dbReference type="GO" id="GO:0020002">
    <property type="term" value="C:host cell plasma membrane"/>
    <property type="evidence" value="ECO:0007669"/>
    <property type="project" value="UniProtKB-SubCell"/>
</dbReference>
<dbReference type="GO" id="GO:0016020">
    <property type="term" value="C:membrane"/>
    <property type="evidence" value="ECO:0007669"/>
    <property type="project" value="UniProtKB-KW"/>
</dbReference>
<dbReference type="GO" id="GO:0005525">
    <property type="term" value="F:GTP binding"/>
    <property type="evidence" value="ECO:0007669"/>
    <property type="project" value="InterPro"/>
</dbReference>
<dbReference type="Gene3D" id="3.30.62.10">
    <property type="entry name" value="Nef Regulatory Factor"/>
    <property type="match status" value="1"/>
</dbReference>
<dbReference type="InterPro" id="IPR027481">
    <property type="entry name" value="HIV-1_Nef_core_sf"/>
</dbReference>
<dbReference type="InterPro" id="IPR001558">
    <property type="entry name" value="HIV_Nef"/>
</dbReference>
<dbReference type="Pfam" id="PF00469">
    <property type="entry name" value="F-protein"/>
    <property type="match status" value="1"/>
</dbReference>
<dbReference type="SUPFAM" id="SSF55671">
    <property type="entry name" value="Regulatory factor Nef"/>
    <property type="match status" value="1"/>
</dbReference>
<organism>
    <name type="scientific">Human immunodeficiency virus type 2 subtype A (isolate BEN)</name>
    <name type="common">HIV-2</name>
    <dbReference type="NCBI Taxonomy" id="11714"/>
    <lineage>
        <taxon>Viruses</taxon>
        <taxon>Riboviria</taxon>
        <taxon>Pararnavirae</taxon>
        <taxon>Artverviricota</taxon>
        <taxon>Revtraviricetes</taxon>
        <taxon>Ortervirales</taxon>
        <taxon>Retroviridae</taxon>
        <taxon>Orthoretrovirinae</taxon>
        <taxon>Lentivirus</taxon>
        <taxon>Human immunodeficiency virus 2</taxon>
    </lineage>
</organism>
<protein>
    <recommendedName>
        <fullName>Protein Nef</fullName>
    </recommendedName>
    <alternativeName>
        <fullName>3'ORF</fullName>
    </alternativeName>
    <alternativeName>
        <fullName>Negative factor</fullName>
        <shortName>F-protein</shortName>
    </alternativeName>
</protein>
<name>NEF_HV2BE</name>
<keyword id="KW-0014">AIDS</keyword>
<keyword id="KW-1032">Host cell membrane</keyword>
<keyword id="KW-1043">Host membrane</keyword>
<keyword id="KW-0945">Host-virus interaction</keyword>
<keyword id="KW-0449">Lipoprotein</keyword>
<keyword id="KW-0472">Membrane</keyword>
<keyword id="KW-0519">Myristate</keyword>
<keyword id="KW-1185">Reference proteome</keyword>
<keyword id="KW-0899">Viral immunoevasion</keyword>
<keyword id="KW-0843">Virulence</keyword>
<organismHost>
    <name type="scientific">Homo sapiens</name>
    <name type="common">Human</name>
    <dbReference type="NCBI Taxonomy" id="9606"/>
</organismHost>
<gene>
    <name type="primary">nef</name>
</gene>
<accession>P18092</accession>
<reference key="1">
    <citation type="journal article" date="1990" name="Virology">
        <title>A novel proviral clone of HIV-2: biological and phylogenetic relationship to other primate immunodeficiency viruses.</title>
        <authorList>
            <person name="Kirchhoff F."/>
            <person name="Jentsch K."/>
            <person name="Bachmann B."/>
            <person name="Stuke A."/>
            <person name="Laloux C."/>
            <person name="Lueke W."/>
            <person name="Stahl-Henning C."/>
            <person name="Schneider J."/>
            <person name="Nieselt K."/>
            <person name="Eigen M."/>
            <person name="Hunsmann G."/>
        </authorList>
    </citation>
    <scope>NUCLEOTIDE SEQUENCE [GENOMIC DNA]</scope>
</reference>
<reference key="2">
    <citation type="journal article" date="2005" name="J. Virol.">
        <title>Primary sooty mangabey simian immunodeficiency virus and human immunodeficiency virus type 2 nef alleles modulate cell surface expression of various human receptors and enhance viral infectivity and replication.</title>
        <authorList>
            <person name="Munch J."/>
            <person name="Schindler M."/>
            <person name="Wildum S."/>
            <person name="Rucker E."/>
            <person name="Bailer N."/>
            <person name="Knoop V."/>
            <person name="Novembre F.J."/>
            <person name="Kirchhoff F."/>
        </authorList>
    </citation>
    <scope>FUNCTION</scope>
</reference>
<sequence>MGASGSKKLSKHSRGLRERLLRARGDGYGKQRDASGGEYSQFQEESGREQNSPSCEGQQYQQGEYMNSPWRNPATERQKDLYRQQNMDDVDSDDDDLIGVPVTPRVPRREMTYKLAIDMSHFIKEKGGLQGMFYSRRRHRILDIYLEKEEGIIPDWQNYTHGPGVRYPMYFGWLWKLVSVELSQEAEEDEANCLVHPAQTSRHDDEHGETLVWQFDSMLAYNYKAFTLYPEEFGHKSGLPEKEWKAKLKARGIPYSE</sequence>
<evidence type="ECO:0000250" key="1"/>
<evidence type="ECO:0000256" key="2">
    <source>
        <dbReference type="SAM" id="MobiDB-lite"/>
    </source>
</evidence>
<evidence type="ECO:0000269" key="3">
    <source>
    </source>
</evidence>
<evidence type="ECO:0000305" key="4"/>
<evidence type="ECO:0000305" key="5">
    <source>
    </source>
</evidence>
<comment type="function">
    <text evidence="1">Factor of infectivity and pathogenicity, required for optimal virus replication. Alters numerous pathways of T-lymphocyte function and down-regulates immunity surface molecules in order to evade host defense and increase viral infectivity. Alters the functionality of other immunity cells, like dendritic cells, monocytes/macrophages and NK cells. One of the earliest and most abundantly expressed viral proteins (By similarity).</text>
</comment>
<comment type="function">
    <text evidence="5">In infected CD4(+) T-lymphocytes, down-regulates cell surface expression of CD4, CD28, CD3, and MHC-I or MHC-II molecules.</text>
</comment>
<comment type="function">
    <text evidence="3">Interferes with TCR signaling from the cell membrane. Interacts with CD247/TCRZ (TCR zeta chain) and exert potent down-regulation of cell surface TCR/CD3 complexes.</text>
</comment>
<comment type="function">
    <text evidence="1">Plays a role in optimizing the host cell environment for viral replication without causing cell death by apoptosis. Protects the infected cells from apoptosis in order to keep them alive until the next virus generation is ready to strike (By similarity).</text>
</comment>
<comment type="function">
    <text evidence="1">Extracellular Nef protein targets CD4(+) T-lymphocytes for apoptosis by interacting with CXCR4 surface receptors.</text>
</comment>
<comment type="subunit">
    <text evidence="1">Homodimer (By similarity). Interacts with host CD247/TCRZ; this interaction induces down-regulation of cell surface TCR/CD3 complexes.</text>
</comment>
<comment type="subcellular location">
    <subcellularLocation>
        <location evidence="1">Host cell membrane</location>
        <topology evidence="1">Lipid-anchor</topology>
        <orientation evidence="1">Cytoplasmic side</orientation>
    </subcellularLocation>
    <text evidence="1">Associates with the inner plasma membrane through its N-terminal domain.</text>
</comment>
<comment type="domain">
    <text evidence="1">The N-terminal domain is composed of the N-myristoyl glycine and of a cluster of positively charged amino acids. It is required for inner plasma membrane targeting of Nef and virion incorporation, and thereby for infectivity (By similarity).</text>
</comment>
<comment type="miscellaneous">
    <text>This isolate is from a German AIDS patient (with predominantly neurological complications) who was probably infected in Mali.</text>
</comment>
<comment type="similarity">
    <text evidence="4">Belongs to the lentivirus primate group Nef protein family.</text>
</comment>
<proteinExistence type="inferred from homology"/>
<feature type="initiator methionine" description="Removed; by host" evidence="1">
    <location>
        <position position="1"/>
    </location>
</feature>
<feature type="chain" id="PRO_0000085230" description="Protein Nef">
    <location>
        <begin position="2"/>
        <end position="257"/>
    </location>
</feature>
<feature type="region of interest" description="Disordered" evidence="2">
    <location>
        <begin position="1"/>
        <end position="72"/>
    </location>
</feature>
<feature type="region of interest" description="Acidic">
    <location>
        <begin position="88"/>
        <end position="96"/>
    </location>
</feature>
<feature type="region of interest" description="Mediates dimerization" evidence="1">
    <location>
        <begin position="140"/>
        <end position="156"/>
    </location>
</feature>
<feature type="short sequence motif" description="PxxP" evidence="1">
    <location>
        <begin position="104"/>
        <end position="107"/>
    </location>
</feature>
<feature type="compositionally biased region" description="Basic and acidic residues" evidence="2">
    <location>
        <begin position="15"/>
        <end position="35"/>
    </location>
</feature>
<feature type="compositionally biased region" description="Polar residues" evidence="2">
    <location>
        <begin position="38"/>
        <end position="65"/>
    </location>
</feature>
<feature type="lipid moiety-binding region" description="N-myristoyl glycine; by host" evidence="1">
    <location>
        <position position="2"/>
    </location>
</feature>